<proteinExistence type="inferred from homology"/>
<evidence type="ECO:0000255" key="1">
    <source>
        <dbReference type="HAMAP-Rule" id="MF_00693"/>
    </source>
</evidence>
<evidence type="ECO:0000256" key="2">
    <source>
        <dbReference type="SAM" id="MobiDB-lite"/>
    </source>
</evidence>
<organism>
    <name type="scientific">Rhodopseudomonas palustris (strain TIE-1)</name>
    <dbReference type="NCBI Taxonomy" id="395960"/>
    <lineage>
        <taxon>Bacteria</taxon>
        <taxon>Pseudomonadati</taxon>
        <taxon>Pseudomonadota</taxon>
        <taxon>Alphaproteobacteria</taxon>
        <taxon>Hyphomicrobiales</taxon>
        <taxon>Nitrobacteraceae</taxon>
        <taxon>Rhodopseudomonas</taxon>
    </lineage>
</organism>
<accession>B3QHR9</accession>
<comment type="subcellular location">
    <subcellularLocation>
        <location evidence="1">Cytoplasm</location>
    </subcellularLocation>
</comment>
<comment type="similarity">
    <text evidence="1">Belongs to the TACO1 family.</text>
</comment>
<gene>
    <name type="ordered locus">Rpal_1287</name>
</gene>
<sequence length="248" mass="26941">MAGHSQFKNIMHRKGRQDAQRSKLFSKLAREITVAAKLGTPDPAMNPRLRAAVLAARAENMPKDNIERAIKKAIGGDSENYDEIRYEGYGPGGVAVIVEALTDNRNRAASDIRSFFTKSGGNLGETGSVSFMFDRTGIIEYDADKASADDMLDAAIEAGADDVVSSEAGHEIYASQETFRDVAKALEAKFGEARKAAVIWKPQNTVAVDDETGEKLFKLMDALNDHDDVQNVYANFEVSDALMAKMAG</sequence>
<keyword id="KW-0963">Cytoplasm</keyword>
<keyword id="KW-0238">DNA-binding</keyword>
<keyword id="KW-0804">Transcription</keyword>
<keyword id="KW-0805">Transcription regulation</keyword>
<dbReference type="EMBL" id="CP001096">
    <property type="protein sequence ID" value="ACE99826.1"/>
    <property type="molecule type" value="Genomic_DNA"/>
</dbReference>
<dbReference type="RefSeq" id="WP_011156661.1">
    <property type="nucleotide sequence ID" value="NC_011004.1"/>
</dbReference>
<dbReference type="SMR" id="B3QHR9"/>
<dbReference type="KEGG" id="rpt:Rpal_1287"/>
<dbReference type="HOGENOM" id="CLU_062974_2_2_5"/>
<dbReference type="OrthoDB" id="9781053at2"/>
<dbReference type="Proteomes" id="UP000001725">
    <property type="component" value="Chromosome"/>
</dbReference>
<dbReference type="GO" id="GO:0005829">
    <property type="term" value="C:cytosol"/>
    <property type="evidence" value="ECO:0007669"/>
    <property type="project" value="TreeGrafter"/>
</dbReference>
<dbReference type="GO" id="GO:0003677">
    <property type="term" value="F:DNA binding"/>
    <property type="evidence" value="ECO:0007669"/>
    <property type="project" value="UniProtKB-UniRule"/>
</dbReference>
<dbReference type="GO" id="GO:0006355">
    <property type="term" value="P:regulation of DNA-templated transcription"/>
    <property type="evidence" value="ECO:0007669"/>
    <property type="project" value="UniProtKB-UniRule"/>
</dbReference>
<dbReference type="FunFam" id="1.10.10.200:FF:000002">
    <property type="entry name" value="Probable transcriptional regulatory protein CLM62_37755"/>
    <property type="match status" value="1"/>
</dbReference>
<dbReference type="Gene3D" id="1.10.10.200">
    <property type="match status" value="1"/>
</dbReference>
<dbReference type="Gene3D" id="3.30.70.980">
    <property type="match status" value="2"/>
</dbReference>
<dbReference type="HAMAP" id="MF_00693">
    <property type="entry name" value="Transcrip_reg_TACO1"/>
    <property type="match status" value="1"/>
</dbReference>
<dbReference type="InterPro" id="IPR017856">
    <property type="entry name" value="Integrase-like_N"/>
</dbReference>
<dbReference type="InterPro" id="IPR048300">
    <property type="entry name" value="TACO1_YebC-like_2nd/3rd_dom"/>
</dbReference>
<dbReference type="InterPro" id="IPR049083">
    <property type="entry name" value="TACO1_YebC_N"/>
</dbReference>
<dbReference type="InterPro" id="IPR002876">
    <property type="entry name" value="Transcrip_reg_TACO1-like"/>
</dbReference>
<dbReference type="InterPro" id="IPR026564">
    <property type="entry name" value="Transcrip_reg_TACO1-like_dom3"/>
</dbReference>
<dbReference type="InterPro" id="IPR029072">
    <property type="entry name" value="YebC-like"/>
</dbReference>
<dbReference type="NCBIfam" id="NF001030">
    <property type="entry name" value="PRK00110.1"/>
    <property type="match status" value="1"/>
</dbReference>
<dbReference type="NCBIfam" id="NF009044">
    <property type="entry name" value="PRK12378.1"/>
    <property type="match status" value="1"/>
</dbReference>
<dbReference type="NCBIfam" id="TIGR01033">
    <property type="entry name" value="YebC/PmpR family DNA-binding transcriptional regulator"/>
    <property type="match status" value="1"/>
</dbReference>
<dbReference type="PANTHER" id="PTHR12532:SF6">
    <property type="entry name" value="TRANSCRIPTIONAL REGULATORY PROTEIN YEBC-RELATED"/>
    <property type="match status" value="1"/>
</dbReference>
<dbReference type="PANTHER" id="PTHR12532">
    <property type="entry name" value="TRANSLATIONAL ACTIVATOR OF CYTOCHROME C OXIDASE 1"/>
    <property type="match status" value="1"/>
</dbReference>
<dbReference type="Pfam" id="PF20772">
    <property type="entry name" value="TACO1_YebC_N"/>
    <property type="match status" value="1"/>
</dbReference>
<dbReference type="Pfam" id="PF01709">
    <property type="entry name" value="Transcrip_reg"/>
    <property type="match status" value="1"/>
</dbReference>
<dbReference type="SUPFAM" id="SSF75625">
    <property type="entry name" value="YebC-like"/>
    <property type="match status" value="1"/>
</dbReference>
<reference key="1">
    <citation type="submission" date="2008-05" db="EMBL/GenBank/DDBJ databases">
        <title>Complete sequence of Rhodopseudomonas palustris TIE-1.</title>
        <authorList>
            <consortium name="US DOE Joint Genome Institute"/>
            <person name="Lucas S."/>
            <person name="Copeland A."/>
            <person name="Lapidus A."/>
            <person name="Glavina del Rio T."/>
            <person name="Dalin E."/>
            <person name="Tice H."/>
            <person name="Pitluck S."/>
            <person name="Chain P."/>
            <person name="Malfatti S."/>
            <person name="Shin M."/>
            <person name="Vergez L."/>
            <person name="Lang D."/>
            <person name="Schmutz J."/>
            <person name="Larimer F."/>
            <person name="Land M."/>
            <person name="Hauser L."/>
            <person name="Kyrpides N."/>
            <person name="Mikhailova N."/>
            <person name="Emerson D."/>
            <person name="Newman D.K."/>
            <person name="Roden E."/>
            <person name="Richardson P."/>
        </authorList>
    </citation>
    <scope>NUCLEOTIDE SEQUENCE [LARGE SCALE GENOMIC DNA]</scope>
    <source>
        <strain>TIE-1</strain>
    </source>
</reference>
<feature type="chain" id="PRO_1000132235" description="Probable transcriptional regulatory protein Rpal_1287">
    <location>
        <begin position="1"/>
        <end position="248"/>
    </location>
</feature>
<feature type="region of interest" description="Disordered" evidence="2">
    <location>
        <begin position="1"/>
        <end position="21"/>
    </location>
</feature>
<protein>
    <recommendedName>
        <fullName evidence="1">Probable transcriptional regulatory protein Rpal_1287</fullName>
    </recommendedName>
</protein>
<name>Y1287_RHOPT</name>